<comment type="function">
    <text evidence="6 7 8 13">Probable FMRFamide-like neuropeptides (PubMed:16377032, PubMed:28094002). Binds to neuronal receptors such as dmsr-1 to promote sleep in response to cellular stress also known as stress-induced sleep (SIS) (PubMed:28094002). Plays a role in behaviors associated with SIS, acting in concert with the FMRFamide related peptide, flp-24 and neuropeptide-like protein nlp-8 (PubMed:27546573).</text>
</comment>
<comment type="function">
    <text evidence="2 6 8">AADGAPLIRF-amide: Inhibits muscle tension in somatic muscle (PubMed:11527423). Acts as a ligand for the npr-22 receptor in vitro (PubMed:16377032). Acts as a ligand for isoform a of the dmsr-1 G-protein coupled receptor in vitro (PubMed:28094002).</text>
</comment>
<comment type="function">
    <text evidence="5 8 9">APEASPFIRF-amide: Inhibits muscle tension in somatic muscle (PubMed:9070852). Potent inhibitor of the activity of the dissected pharyngeal myogenic muscle system (PubMed:16187307). Acts as a ligand for isoform a of the dmsr-1 G-protein coupled receptor in vitro (PubMed:28094002).</text>
</comment>
<comment type="function">
    <molecule>ASPSAPLIRF-amide</molecule>
    <text evidence="6 8">Acts as a ligand for the npr-22 receptor in vitro. Acts as a ligand for isoform a of the dmsr-1 G-protein coupled receptor in vitro (PubMed:28094002).</text>
</comment>
<comment type="function">
    <molecule>SPSAVPLIRF-amide</molecule>
    <text evidence="6 8">Acts as a ligand for the npr-22 receptor in vitro. Acts as a ligand for isoform a of the dmsr-1 G-protein coupled receptor in vitro (PubMed:28094002).</text>
</comment>
<comment type="function">
    <molecule>SAAAPLIRF-amide</molecule>
    <text evidence="6 8">Acts as a ligand for the npr-22 receptor in vitro. Acts as a ligand for isoform a of the dmsr-1 G-protein coupled receptor in vitro (PubMed:28094002).</text>
</comment>
<comment type="function">
    <molecule>ASSAPLIRF-amide</molecule>
    <text evidence="6 8">Acts as a ligand for the npr-22 receptor in vitro. Acts as a ligand for isoform a of the dmsr-1 G-protein coupled receptor in vitro (PubMed:28094002).</text>
</comment>
<comment type="function">
    <molecule>AMDSPLIRF-amide</molecule>
    <text evidence="8">Acts as a ligand for isoform a of the dmsr-1 G-protein coupled receptor in vitro.</text>
</comment>
<comment type="subcellular location">
    <subcellularLocation>
        <location evidence="13">Secreted</location>
    </subcellularLocation>
</comment>
<comment type="tissue specificity">
    <text evidence="3">Expressed in the ASE sensory neurons, the DD motor neurons, the 15, M3 and M5 cholinergic pharyngeal motoneurons, and the ASG, ASK and BAG neurons.</text>
</comment>
<comment type="developmental stage">
    <text evidence="3 7 10">Expressed from the comma stage of embryogenesis, during all larval stages, and in low levels in adults (PubMed:15236235, PubMed:9685599). Expressed in the ALA neuron in L4 stage larvae (PubMed:27546573).</text>
</comment>
<comment type="mass spectrometry" mass="1032.0" method="MALDI" evidence="2">
    <molecule>AADGAPLIRF-amide 1</molecule>
    <text>The measured mass is that of either AADGAPLIRF-amide 1 or AADGAPLIRF-amide 2.</text>
</comment>
<comment type="mass spectrometry" mass="1133.7" method="MALDI" evidence="9">
    <molecule>APEASPFIRF-amide 1</molecule>
</comment>
<comment type="similarity">
    <text evidence="1">Belongs to the FARP (FMRFamide related peptide) family.</text>
</comment>
<reference evidence="13" key="1">
    <citation type="journal article" date="1998" name="Brain Res. Mol. Brain Res.">
        <title>FMRFamide-related gene family in the nematode, Caenorhabditis elegans.</title>
        <authorList>
            <person name="Nelson L.S."/>
            <person name="Kim K."/>
            <person name="Memmott J.E."/>
            <person name="Li C."/>
        </authorList>
    </citation>
    <scope>NUCLEOTIDE SEQUENCE [MRNA]</scope>
    <scope>DEVELOPMENTAL STAGE</scope>
    <scope>AMIDATION AT PHE-157</scope>
    <source>
        <strain evidence="10">Bristol N2</strain>
    </source>
</reference>
<reference evidence="13" key="2">
    <citation type="journal article" date="1998" name="Science">
        <title>Genome sequence of the nematode C. elegans: a platform for investigating biology.</title>
        <authorList>
            <consortium name="The C. elegans sequencing consortium"/>
        </authorList>
    </citation>
    <scope>NUCLEOTIDE SEQUENCE [LARGE SCALE GENOMIC DNA]</scope>
    <source>
        <strain evidence="11">Bristol N2</strain>
    </source>
</reference>
<reference evidence="13" key="3">
    <citation type="journal article" date="2005" name="Biochem. Biophys. Res. Commun.">
        <title>Discovering neuropeptides in Caenorhabditis elegans by two dimensional liquid chromatography and mass spectrometry.</title>
        <authorList>
            <person name="Husson S.J."/>
            <person name="Clynen E."/>
            <person name="Baggerman G."/>
            <person name="De Loof A."/>
            <person name="Schoofs L."/>
        </authorList>
    </citation>
    <scope>PROTEIN SEQUENCE OF 52-60; 64-73; 76-85; 89-98; 101-110; 114-123; 126-135 AND 138-146</scope>
    <scope>AMIDATION AT PHE-60; PHE-73; PHE-85; PHE-98; PHE-110; PHE-123; PHE-135 AND PHE-146</scope>
    <source>
        <strain evidence="4">Bristol N2</strain>
    </source>
</reference>
<reference evidence="13" key="4">
    <citation type="journal article" date="2001" name="Biochem. Biophys. Res. Commun.">
        <title>Isolation and preliminary biological assessment of AADGAPLIRFamide and SVPGVLRFamide from Caenorhabditis elegans.</title>
        <authorList>
            <person name="Marks N.J."/>
            <person name="Shaw C."/>
            <person name="Halton D.W."/>
            <person name="Thompson D.P."/>
            <person name="Geary T.G."/>
            <person name="Li C."/>
            <person name="Maule A.G."/>
        </authorList>
    </citation>
    <scope>PROTEIN SEQUENCE OF 64-73 AND 89-98</scope>
    <scope>FUNCTION</scope>
    <scope>MASS SPECTROMETRY</scope>
    <scope>AMIDATION AT PHE-73 AND PHE-98</scope>
</reference>
<reference evidence="13" key="5">
    <citation type="journal article" date="1997" name="Biochem. Biophys. Res. Commun.">
        <title>APEASPFIRFamide, a novel FMRFamide-related decapeptide from Caenorhabditis elegans: structure and myoactivity.</title>
        <authorList>
            <person name="Marks N.J."/>
            <person name="Maule A.G."/>
            <person name="Geary T.G."/>
            <person name="Thompson D.P."/>
            <person name="Davis J.P."/>
            <person name="Halton D.W."/>
            <person name="Verhaert P."/>
            <person name="Shaw C."/>
        </authorList>
    </citation>
    <scope>PROTEIN SEQUENCE OF 76-85 AND 101-110</scope>
    <scope>FUNCTION</scope>
    <scope>MASS SPECTROMETRY</scope>
    <scope>AMIDATION AT PHE-85 AND PHE-110</scope>
</reference>
<reference evidence="13" key="6">
    <citation type="journal article" date="2004" name="J. Comp. Neurol.">
        <title>Expression and regulation of an FMRFamide-related neuropeptide gene family in Caenorhabditis elegans.</title>
        <authorList>
            <person name="Kim K."/>
            <person name="Li C."/>
        </authorList>
    </citation>
    <scope>TISSUE SPECIFICITY</scope>
    <scope>DEVELOPMENTAL STAGE</scope>
</reference>
<reference evidence="13" key="7">
    <citation type="journal article" date="2005" name="J. Neurobiol.">
        <title>Role of a FMRFamide-like family of neuropeptides in the pharyngeal nervous system of Caenorhabditis elegans.</title>
        <authorList>
            <person name="Papaioannou S."/>
            <person name="Marsden D."/>
            <person name="Franks C.J."/>
            <person name="Walker R.J."/>
            <person name="Holden-Dye L."/>
        </authorList>
    </citation>
    <scope>FUNCTION</scope>
</reference>
<reference key="8">
    <citation type="journal article" date="2006" name="Peptides">
        <title>FMRFamide related peptide ligands activate the Caenorhabditis elegans orphan GPCR Y59H11AL.1.</title>
        <authorList>
            <person name="Mertens I."/>
            <person name="Clinckspoor I."/>
            <person name="Janssen T."/>
            <person name="Nachman R."/>
            <person name="Schoofs L."/>
        </authorList>
    </citation>
    <scope>FUNCTION (AADGAPLIRF-AMIDE; ASPSAPLIRF-AMIDE; SPSAVPLIRF-AMIDE; SAAAPLIRF-AMIDE AND ASSAPLIRF-AMIDE)</scope>
</reference>
<reference evidence="13" key="9">
    <citation type="journal article" date="2016" name="Curr. Biol.">
        <title>C. elegans Stress-Induced Sleep Emerges from the Collective Action of Multiple Neuropeptides.</title>
        <authorList>
            <person name="Nath R.D."/>
            <person name="Chow E.S."/>
            <person name="Wang H."/>
            <person name="Schwarz E.M."/>
            <person name="Sternberg P.W."/>
        </authorList>
    </citation>
    <scope>FUNCTION</scope>
    <scope>DEVELOPMENTAL STAGE</scope>
</reference>
<reference key="10">
    <citation type="journal article" date="2017" name="Elife">
        <title>The RFamide receptor DMSR-1 regulates stress-induced sleep in C. elegans.</title>
        <authorList>
            <person name="Iannacone M.J."/>
            <person name="Beets I."/>
            <person name="Lopes L.E."/>
            <person name="Churgin M.A."/>
            <person name="Fang-Yen C."/>
            <person name="Nelson M.D."/>
            <person name="Schoofs L."/>
            <person name="Raizen D.M."/>
        </authorList>
    </citation>
    <scope>FUNCTION (AADGAPLIRF-AMIDE; APEASPFIRF-AMIDE; ASPSAPLIRF-AMIDE; SPSAVPLIRF-AMIDE; SAAAPLIRF-AMIDE; ASSAPLIRF-AMIDE AND AMDSPLIRF-AMIDE)</scope>
</reference>
<dbReference type="EMBL" id="AF042400">
    <property type="protein sequence ID" value="AAC08951.1"/>
    <property type="molecule type" value="mRNA"/>
</dbReference>
<dbReference type="EMBL" id="BX284604">
    <property type="protein sequence ID" value="CCD63768.1"/>
    <property type="molecule type" value="Genomic_DNA"/>
</dbReference>
<dbReference type="PIR" id="T32553">
    <property type="entry name" value="T32553"/>
</dbReference>
<dbReference type="RefSeq" id="NP_501255.1">
    <property type="nucleotide sequence ID" value="NM_068854.5"/>
</dbReference>
<dbReference type="BioGRID" id="42665">
    <property type="interactions" value="5"/>
</dbReference>
<dbReference type="FunCoup" id="O44185">
    <property type="interactions" value="1328"/>
</dbReference>
<dbReference type="STRING" id="6239.F33D4.3.1"/>
<dbReference type="PaxDb" id="6239-F33D4.3"/>
<dbReference type="EnsemblMetazoa" id="F33D4.3.1">
    <property type="protein sequence ID" value="F33D4.3.1"/>
    <property type="gene ID" value="WBGene00001456"/>
</dbReference>
<dbReference type="GeneID" id="177547"/>
<dbReference type="KEGG" id="cel:CELE_F33D4.3"/>
<dbReference type="UCSC" id="F33D4.3">
    <property type="organism name" value="c. elegans"/>
</dbReference>
<dbReference type="AGR" id="WB:WBGene00001456"/>
<dbReference type="CTD" id="177547"/>
<dbReference type="WormBase" id="F33D4.3">
    <property type="protein sequence ID" value="CE17033"/>
    <property type="gene ID" value="WBGene00001456"/>
    <property type="gene designation" value="flp-13"/>
</dbReference>
<dbReference type="eggNOG" id="ENOG502SDD0">
    <property type="taxonomic scope" value="Eukaryota"/>
</dbReference>
<dbReference type="HOGENOM" id="CLU_1723987_0_0_1"/>
<dbReference type="InParanoid" id="O44185"/>
<dbReference type="OMA" id="PLMGFRK"/>
<dbReference type="OrthoDB" id="5833048at2759"/>
<dbReference type="PhylomeDB" id="O44185"/>
<dbReference type="PRO" id="PR:O44185"/>
<dbReference type="Proteomes" id="UP000001940">
    <property type="component" value="Chromosome IV"/>
</dbReference>
<dbReference type="Bgee" id="WBGene00001456">
    <property type="expression patterns" value="Expressed in larva and 3 other cell types or tissues"/>
</dbReference>
<dbReference type="GO" id="GO:0005576">
    <property type="term" value="C:extracellular region"/>
    <property type="evidence" value="ECO:0000305"/>
    <property type="project" value="UniProtKB"/>
</dbReference>
<dbReference type="GO" id="GO:0071855">
    <property type="term" value="F:neuropeptide receptor binding"/>
    <property type="evidence" value="ECO:0000314"/>
    <property type="project" value="UniProtKB"/>
</dbReference>
<dbReference type="GO" id="GO:0007218">
    <property type="term" value="P:neuropeptide signaling pathway"/>
    <property type="evidence" value="ECO:0000314"/>
    <property type="project" value="UniProtKB"/>
</dbReference>
<dbReference type="GO" id="GO:1900034">
    <property type="term" value="P:regulation of cellular response to heat"/>
    <property type="evidence" value="ECO:0000316"/>
    <property type="project" value="UniProtKB"/>
</dbReference>
<dbReference type="GO" id="GO:0045187">
    <property type="term" value="P:regulation of circadian sleep/wake cycle, sleep"/>
    <property type="evidence" value="ECO:0000315"/>
    <property type="project" value="UniProtKB"/>
</dbReference>
<dbReference type="InterPro" id="IPR002544">
    <property type="entry name" value="FMRFamid-related_peptide-like"/>
</dbReference>
<dbReference type="InterPro" id="IPR051041">
    <property type="entry name" value="FMRFamide-related_np"/>
</dbReference>
<dbReference type="PANTHER" id="PTHR20986:SF15">
    <property type="entry name" value="FMRFAMIDE-LIKE NEUROPEPTIDES 13"/>
    <property type="match status" value="1"/>
</dbReference>
<dbReference type="PANTHER" id="PTHR20986">
    <property type="entry name" value="FMRFAMIDE-RELATED PEPTIDES"/>
    <property type="match status" value="1"/>
</dbReference>
<dbReference type="Pfam" id="PF01581">
    <property type="entry name" value="FARP"/>
    <property type="match status" value="6"/>
</dbReference>
<name>FLP13_CAEEL</name>
<accession>O44185</accession>
<keyword id="KW-0027">Amidation</keyword>
<keyword id="KW-0165">Cleavage on pair of basic residues</keyword>
<keyword id="KW-0903">Direct protein sequencing</keyword>
<keyword id="KW-0527">Neuropeptide</keyword>
<keyword id="KW-1185">Reference proteome</keyword>
<keyword id="KW-0677">Repeat</keyword>
<keyword id="KW-0964">Secreted</keyword>
<keyword id="KW-0732">Signal</keyword>
<gene>
    <name evidence="14" type="primary">flp-13</name>
    <name evidence="14" type="ORF">F33D4.3</name>
</gene>
<organism>
    <name type="scientific">Caenorhabditis elegans</name>
    <dbReference type="NCBI Taxonomy" id="6239"/>
    <lineage>
        <taxon>Eukaryota</taxon>
        <taxon>Metazoa</taxon>
        <taxon>Ecdysozoa</taxon>
        <taxon>Nematoda</taxon>
        <taxon>Chromadorea</taxon>
        <taxon>Rhabditida</taxon>
        <taxon>Rhabditina</taxon>
        <taxon>Rhabditomorpha</taxon>
        <taxon>Rhabditoidea</taxon>
        <taxon>Rhabditidae</taxon>
        <taxon>Peloderinae</taxon>
        <taxon>Caenorhabditis</taxon>
    </lineage>
</organism>
<sequence length="160" mass="17736">MMTSLLTISMFVVAIQAFDSSEIRMLDEQYDTKNPFFQFLENSKRSDRPTRAMDSPLIRFGKRAADGAPLIRFGRAPEASPFIRFGKRAADGAPLIRFGRAPEASPFIRFGKRASPSAPLIRFGRSPSAVPLIRFGRSAAAPLIRFGRASSAPLIRFGRK</sequence>
<feature type="signal peptide" evidence="1">
    <location>
        <begin position="1"/>
        <end position="17"/>
    </location>
</feature>
<feature type="propeptide" id="PRO_0000009556" evidence="13">
    <location>
        <begin position="18"/>
        <end position="43"/>
    </location>
</feature>
<feature type="peptide" id="PRO_0000248047" description="SDRPTRAMDSPLIRF-amide" evidence="1 12">
    <location>
        <begin position="46"/>
        <end position="60"/>
    </location>
</feature>
<feature type="peptide" id="PRO_0000311849" description="AMDSPLIRF-amide" evidence="4">
    <location>
        <begin position="52"/>
        <end position="60"/>
    </location>
</feature>
<feature type="peptide" id="PRO_0000009557" description="AADGAPLIRF-amide 1" evidence="2 4">
    <location>
        <begin position="64"/>
        <end position="73"/>
    </location>
</feature>
<feature type="peptide" id="PRO_0000009558" description="APEASPFIRF-amide 1" evidence="4 9">
    <location>
        <begin position="76"/>
        <end position="85"/>
    </location>
</feature>
<feature type="peptide" id="PRO_0000009559" description="AADGAPLIRF-amide 2" evidence="2 4">
    <location>
        <begin position="89"/>
        <end position="98"/>
    </location>
</feature>
<feature type="peptide" id="PRO_0000248048" description="APEASPFIRF-amide 2" evidence="4 9">
    <location>
        <begin position="101"/>
        <end position="110"/>
    </location>
</feature>
<feature type="peptide" id="PRO_0000248049" description="ASPSAPLIRF-amide" evidence="4">
    <location>
        <begin position="114"/>
        <end position="123"/>
    </location>
</feature>
<feature type="peptide" id="PRO_0000248050" description="SPSAVPLIRF-amide" evidence="4">
    <location>
        <begin position="126"/>
        <end position="135"/>
    </location>
</feature>
<feature type="peptide" id="PRO_0000248051" description="SAAAPLIRF-amide" evidence="4">
    <location>
        <begin position="138"/>
        <end position="146"/>
    </location>
</feature>
<feature type="peptide" id="PRO_0000248052" description="ASSAPLIRF-amide" evidence="1 12">
    <location>
        <begin position="149"/>
        <end position="157"/>
    </location>
</feature>
<feature type="modified residue" description="Phenylalanine amide" evidence="4">
    <location>
        <position position="60"/>
    </location>
</feature>
<feature type="modified residue" description="Phenylalanine amide" evidence="2 4">
    <location>
        <position position="73"/>
    </location>
</feature>
<feature type="modified residue" description="Phenylalanine amide" evidence="4 9">
    <location>
        <position position="85"/>
    </location>
</feature>
<feature type="modified residue" description="Phenylalanine amide" evidence="2 4">
    <location>
        <position position="98"/>
    </location>
</feature>
<feature type="modified residue" description="Phenylalanine amide" evidence="4 9">
    <location>
        <position position="110"/>
    </location>
</feature>
<feature type="modified residue" description="Phenylalanine amide" evidence="4">
    <location>
        <position position="123"/>
    </location>
</feature>
<feature type="modified residue" description="Phenylalanine amide" evidence="4">
    <location>
        <position position="135"/>
    </location>
</feature>
<feature type="modified residue" description="Phenylalanine amide" evidence="4">
    <location>
        <position position="146"/>
    </location>
</feature>
<feature type="modified residue" description="Phenylalanine amide" evidence="1 12">
    <location>
        <position position="157"/>
    </location>
</feature>
<evidence type="ECO:0000255" key="1"/>
<evidence type="ECO:0000269" key="2">
    <source>
    </source>
</evidence>
<evidence type="ECO:0000269" key="3">
    <source>
    </source>
</evidence>
<evidence type="ECO:0000269" key="4">
    <source>
    </source>
</evidence>
<evidence type="ECO:0000269" key="5">
    <source>
    </source>
</evidence>
<evidence type="ECO:0000269" key="6">
    <source>
    </source>
</evidence>
<evidence type="ECO:0000269" key="7">
    <source>
    </source>
</evidence>
<evidence type="ECO:0000269" key="8">
    <source>
    </source>
</evidence>
<evidence type="ECO:0000269" key="9">
    <source>
    </source>
</evidence>
<evidence type="ECO:0000269" key="10">
    <source>
    </source>
</evidence>
<evidence type="ECO:0000269" key="11">
    <source>
    </source>
</evidence>
<evidence type="ECO:0000303" key="12">
    <source>
    </source>
</evidence>
<evidence type="ECO:0000305" key="13"/>
<evidence type="ECO:0000312" key="14">
    <source>
        <dbReference type="WormBase" id="F33D4.3"/>
    </source>
</evidence>
<proteinExistence type="evidence at protein level"/>
<protein>
    <recommendedName>
        <fullName>FMRFamide-like neuropeptides 13</fullName>
    </recommendedName>
    <component>
        <recommendedName>
            <fullName>SDRPTRAMDSPLIRF-amide</fullName>
        </recommendedName>
    </component>
    <component>
        <recommendedName>
            <fullName>AMDSPLIRF-amide</fullName>
        </recommendedName>
    </component>
    <component>
        <recommendedName>
            <fullName>AADGAPLIRF-amide 1</fullName>
        </recommendedName>
    </component>
    <component>
        <recommendedName>
            <fullName>APEASPFIRF-amide 1</fullName>
        </recommendedName>
    </component>
    <component>
        <recommendedName>
            <fullName>AADGAPLIRF-amide 2</fullName>
        </recommendedName>
    </component>
    <component>
        <recommendedName>
            <fullName>APEASPFIRF-amide 2</fullName>
        </recommendedName>
    </component>
    <component>
        <recommendedName>
            <fullName>ASPSAPLIRF-amide</fullName>
        </recommendedName>
    </component>
    <component>
        <recommendedName>
            <fullName>SPSAVPLIRF-amide</fullName>
        </recommendedName>
    </component>
    <component>
        <recommendedName>
            <fullName>SAAAPLIRF-amide</fullName>
        </recommendedName>
    </component>
    <component>
        <recommendedName>
            <fullName>ASSAPLIRF-amide</fullName>
        </recommendedName>
    </component>
</protein>